<reference key="1">
    <citation type="submission" date="1988-11" db="EMBL/GenBank/DDBJ databases">
        <authorList>
            <person name="Amemura A."/>
            <person name="Fujita M."/>
            <person name="Futai M."/>
        </authorList>
    </citation>
    <scope>NUCLEOTIDE SEQUENCE [GENOMIC DNA]</scope>
    <source>
        <strain>SB-15</strain>
    </source>
</reference>
<proteinExistence type="predicted"/>
<dbReference type="EMBL" id="X13378">
    <property type="protein sequence ID" value="CAA31755.1"/>
    <property type="molecule type" value="Genomic_DNA"/>
</dbReference>
<dbReference type="PIR" id="S01682">
    <property type="entry name" value="S01682"/>
</dbReference>
<dbReference type="SMR" id="P10343"/>
<dbReference type="GO" id="GO:0000287">
    <property type="term" value="F:magnesium ion binding"/>
    <property type="evidence" value="ECO:0007669"/>
    <property type="project" value="InterPro"/>
</dbReference>
<dbReference type="GO" id="GO:0030976">
    <property type="term" value="F:thiamine pyrophosphate binding"/>
    <property type="evidence" value="ECO:0007669"/>
    <property type="project" value="InterPro"/>
</dbReference>
<dbReference type="CDD" id="cd07039">
    <property type="entry name" value="TPP_PYR_POX"/>
    <property type="match status" value="1"/>
</dbReference>
<dbReference type="FunFam" id="3.40.50.1220:FF:000013">
    <property type="entry name" value="Pyruvate dehydrogenase [ubiquinone]"/>
    <property type="match status" value="1"/>
</dbReference>
<dbReference type="Gene3D" id="3.40.50.970">
    <property type="match status" value="1"/>
</dbReference>
<dbReference type="Gene3D" id="3.40.50.1220">
    <property type="entry name" value="TPP-binding domain"/>
    <property type="match status" value="1"/>
</dbReference>
<dbReference type="InterPro" id="IPR029035">
    <property type="entry name" value="DHS-like_NAD/FAD-binding_dom"/>
</dbReference>
<dbReference type="InterPro" id="IPR047211">
    <property type="entry name" value="POXB-like"/>
</dbReference>
<dbReference type="InterPro" id="IPR029061">
    <property type="entry name" value="THDP-binding"/>
</dbReference>
<dbReference type="InterPro" id="IPR012000">
    <property type="entry name" value="Thiamin_PyroP_enz_cen_dom"/>
</dbReference>
<dbReference type="InterPro" id="IPR012001">
    <property type="entry name" value="Thiamin_PyroP_enz_TPP-bd_dom"/>
</dbReference>
<dbReference type="InterPro" id="IPR047210">
    <property type="entry name" value="TPP_PYR_POXB-like"/>
</dbReference>
<dbReference type="PANTHER" id="PTHR42981">
    <property type="entry name" value="PYRUVATE DEHYDROGENASE [UBIQUINONE]"/>
    <property type="match status" value="1"/>
</dbReference>
<dbReference type="PANTHER" id="PTHR42981:SF2">
    <property type="entry name" value="PYRUVATE DEHYDROGENASE [UBIQUINONE]"/>
    <property type="match status" value="1"/>
</dbReference>
<dbReference type="Pfam" id="PF00205">
    <property type="entry name" value="TPP_enzyme_M"/>
    <property type="match status" value="1"/>
</dbReference>
<dbReference type="Pfam" id="PF02776">
    <property type="entry name" value="TPP_enzyme_N"/>
    <property type="match status" value="1"/>
</dbReference>
<dbReference type="SUPFAM" id="SSF52467">
    <property type="entry name" value="DHS-like NAD/FAD-binding domain"/>
    <property type="match status" value="1"/>
</dbReference>
<dbReference type="SUPFAM" id="SSF52518">
    <property type="entry name" value="Thiamin diphosphate-binding fold (THDP-binding)"/>
    <property type="match status" value="1"/>
</dbReference>
<sequence>MANTKVADVVTETLHVAGVKRIYGVVGDSLNGITDSLRRRGDIDWIHVRHEESAAFAAGAEAHLTGELAVCAGSCGPGNLHLINGLFDCHRSRVPVLAIAAHIPSAEIGRGYFQETHPESLFRECSHYCELVSSPEQLPGVLESAIRAAVGLRGVAVVIIPGDVALRESNAKPAAGASMALRPPVVQPAAADVDALAQLLNDSGKVTLLCGRGCAGAHDPLVKLAEALKAPIVHAFGGKEYVEYDNPYDVGMTGLIGFSSGYHAMLNCDTLLMLGTDFPYRQFYPADAKIAQVDVRPENLGRRARLDLGMVGDVSATIGALLPKLKARTDRAYLDACLAHYRKAREGLDELPPASRDASPFTHNTWPSWSARQRRTMRFSRSTWARRRSGPRVISP</sequence>
<protein>
    <recommendedName>
        <fullName>Uncharacterized 42.6 kDa protein in isoamylase 3'region</fullName>
    </recommendedName>
</protein>
<name>YI42_PSEAY</name>
<feature type="chain" id="PRO_0000066263" description="Uncharacterized 42.6 kDa protein in isoamylase 3'region">
    <location>
        <begin position="1"/>
        <end position="396"/>
    </location>
</feature>
<accession>P10343</accession>
<organism>
    <name type="scientific">Pseudomonas amyloderamosa</name>
    <dbReference type="NCBI Taxonomy" id="32043"/>
    <lineage>
        <taxon>Bacteria</taxon>
        <taxon>Pseudomonadati</taxon>
        <taxon>Pseudomonadota</taxon>
        <taxon>Gammaproteobacteria</taxon>
        <taxon>Pseudomonadales</taxon>
        <taxon>Pseudomonadaceae</taxon>
        <taxon>Pseudomonas</taxon>
    </lineage>
</organism>